<feature type="chain" id="PRO_1000083412" description="Large ribosomal subunit protein uL11">
    <location>
        <begin position="1"/>
        <end position="150"/>
    </location>
</feature>
<keyword id="KW-0488">Methylation</keyword>
<keyword id="KW-0687">Ribonucleoprotein</keyword>
<keyword id="KW-0689">Ribosomal protein</keyword>
<keyword id="KW-0694">RNA-binding</keyword>
<keyword id="KW-0699">rRNA-binding</keyword>
<comment type="function">
    <text evidence="1">Forms part of the ribosomal stalk which helps the ribosome interact with GTP-bound translation factors.</text>
</comment>
<comment type="subunit">
    <text evidence="1">Part of the ribosomal stalk of the 50S ribosomal subunit. Interacts with L10 and the large rRNA to form the base of the stalk. L10 forms an elongated spine to which L12 dimers bind in a sequential fashion forming a multimeric L10(L12)X complex.</text>
</comment>
<comment type="PTM">
    <text evidence="1">One or more lysine residues are methylated.</text>
</comment>
<comment type="similarity">
    <text evidence="1">Belongs to the universal ribosomal protein uL11 family.</text>
</comment>
<name>RL11_UREP2</name>
<reference key="1">
    <citation type="submission" date="2008-02" db="EMBL/GenBank/DDBJ databases">
        <title>Genome sequence of Ureaplasma parvum serovar 3.</title>
        <authorList>
            <person name="Methe B.A."/>
            <person name="Glass J."/>
            <person name="Waites K."/>
            <person name="Shrivastava S."/>
        </authorList>
    </citation>
    <scope>NUCLEOTIDE SEQUENCE [LARGE SCALE GENOMIC DNA]</scope>
    <source>
        <strain>ATCC 27815 / 27 / NCTC 11736</strain>
    </source>
</reference>
<sequence length="150" mass="16336">MAPKKKEVTRIAKLNLIGGQAKPGPALASVGINMAEFTKSFNDKTKDQNGKVIPVIITAYKDKSFDYVIKTTPVTFLLKDIAKIKSGAKDPKKQTVATISKEQALEIARYKLIDMTAYDEEAALRMIAGSAKQMGIVIEGVSAYKEKKGN</sequence>
<proteinExistence type="inferred from homology"/>
<evidence type="ECO:0000255" key="1">
    <source>
        <dbReference type="HAMAP-Rule" id="MF_00736"/>
    </source>
</evidence>
<evidence type="ECO:0000305" key="2"/>
<dbReference type="EMBL" id="CP000942">
    <property type="protein sequence ID" value="ACA32779.1"/>
    <property type="molecule type" value="Genomic_DNA"/>
</dbReference>
<dbReference type="SMR" id="B1AJI2"/>
<dbReference type="KEGG" id="upa:UPA3_0579"/>
<dbReference type="HOGENOM" id="CLU_074237_2_2_14"/>
<dbReference type="Proteomes" id="UP000002162">
    <property type="component" value="Chromosome"/>
</dbReference>
<dbReference type="GO" id="GO:0022625">
    <property type="term" value="C:cytosolic large ribosomal subunit"/>
    <property type="evidence" value="ECO:0007669"/>
    <property type="project" value="TreeGrafter"/>
</dbReference>
<dbReference type="GO" id="GO:0070180">
    <property type="term" value="F:large ribosomal subunit rRNA binding"/>
    <property type="evidence" value="ECO:0007669"/>
    <property type="project" value="UniProtKB-UniRule"/>
</dbReference>
<dbReference type="GO" id="GO:0003735">
    <property type="term" value="F:structural constituent of ribosome"/>
    <property type="evidence" value="ECO:0007669"/>
    <property type="project" value="InterPro"/>
</dbReference>
<dbReference type="GO" id="GO:0006412">
    <property type="term" value="P:translation"/>
    <property type="evidence" value="ECO:0007669"/>
    <property type="project" value="UniProtKB-UniRule"/>
</dbReference>
<dbReference type="CDD" id="cd00349">
    <property type="entry name" value="Ribosomal_L11"/>
    <property type="match status" value="1"/>
</dbReference>
<dbReference type="FunFam" id="3.30.1550.10:FF:000006">
    <property type="entry name" value="50S ribosomal protein L11"/>
    <property type="match status" value="1"/>
</dbReference>
<dbReference type="Gene3D" id="1.10.10.250">
    <property type="entry name" value="Ribosomal protein L11, C-terminal domain"/>
    <property type="match status" value="1"/>
</dbReference>
<dbReference type="Gene3D" id="3.30.1550.10">
    <property type="entry name" value="Ribosomal protein L11/L12, N-terminal domain"/>
    <property type="match status" value="1"/>
</dbReference>
<dbReference type="HAMAP" id="MF_00736">
    <property type="entry name" value="Ribosomal_uL11"/>
    <property type="match status" value="1"/>
</dbReference>
<dbReference type="InterPro" id="IPR000911">
    <property type="entry name" value="Ribosomal_uL11"/>
</dbReference>
<dbReference type="InterPro" id="IPR006519">
    <property type="entry name" value="Ribosomal_uL11_bac-typ"/>
</dbReference>
<dbReference type="InterPro" id="IPR020783">
    <property type="entry name" value="Ribosomal_uL11_C"/>
</dbReference>
<dbReference type="InterPro" id="IPR036769">
    <property type="entry name" value="Ribosomal_uL11_C_sf"/>
</dbReference>
<dbReference type="InterPro" id="IPR020785">
    <property type="entry name" value="Ribosomal_uL11_CS"/>
</dbReference>
<dbReference type="InterPro" id="IPR020784">
    <property type="entry name" value="Ribosomal_uL11_N"/>
</dbReference>
<dbReference type="InterPro" id="IPR036796">
    <property type="entry name" value="Ribosomal_uL11_N_sf"/>
</dbReference>
<dbReference type="NCBIfam" id="TIGR01632">
    <property type="entry name" value="L11_bact"/>
    <property type="match status" value="1"/>
</dbReference>
<dbReference type="PANTHER" id="PTHR11661">
    <property type="entry name" value="60S RIBOSOMAL PROTEIN L12"/>
    <property type="match status" value="1"/>
</dbReference>
<dbReference type="PANTHER" id="PTHR11661:SF1">
    <property type="entry name" value="LARGE RIBOSOMAL SUBUNIT PROTEIN UL11M"/>
    <property type="match status" value="1"/>
</dbReference>
<dbReference type="Pfam" id="PF00298">
    <property type="entry name" value="Ribosomal_L11"/>
    <property type="match status" value="1"/>
</dbReference>
<dbReference type="Pfam" id="PF03946">
    <property type="entry name" value="Ribosomal_L11_N"/>
    <property type="match status" value="1"/>
</dbReference>
<dbReference type="SMART" id="SM00649">
    <property type="entry name" value="RL11"/>
    <property type="match status" value="1"/>
</dbReference>
<dbReference type="SUPFAM" id="SSF54747">
    <property type="entry name" value="Ribosomal L11/L12e N-terminal domain"/>
    <property type="match status" value="1"/>
</dbReference>
<dbReference type="SUPFAM" id="SSF46906">
    <property type="entry name" value="Ribosomal protein L11, C-terminal domain"/>
    <property type="match status" value="1"/>
</dbReference>
<dbReference type="PROSITE" id="PS00359">
    <property type="entry name" value="RIBOSOMAL_L11"/>
    <property type="match status" value="1"/>
</dbReference>
<protein>
    <recommendedName>
        <fullName evidence="1">Large ribosomal subunit protein uL11</fullName>
    </recommendedName>
    <alternativeName>
        <fullName evidence="2">50S ribosomal protein L11</fullName>
    </alternativeName>
</protein>
<accession>B1AJI2</accession>
<gene>
    <name evidence="1" type="primary">rplK</name>
    <name type="ordered locus">UPA3_0579</name>
</gene>
<organism>
    <name type="scientific">Ureaplasma parvum serovar 3 (strain ATCC 27815 / 27 / NCTC 11736)</name>
    <dbReference type="NCBI Taxonomy" id="505682"/>
    <lineage>
        <taxon>Bacteria</taxon>
        <taxon>Bacillati</taxon>
        <taxon>Mycoplasmatota</taxon>
        <taxon>Mycoplasmoidales</taxon>
        <taxon>Mycoplasmoidaceae</taxon>
        <taxon>Ureaplasma</taxon>
    </lineage>
</organism>